<accession>Q6A037</accession>
<accession>Q3TCI4</accession>
<accession>Q3UH87</accession>
<accession>Q3UY69</accession>
<organism>
    <name type="scientific">Mus musculus</name>
    <name type="common">Mouse</name>
    <dbReference type="NCBI Taxonomy" id="10090"/>
    <lineage>
        <taxon>Eukaryota</taxon>
        <taxon>Metazoa</taxon>
        <taxon>Chordata</taxon>
        <taxon>Craniata</taxon>
        <taxon>Vertebrata</taxon>
        <taxon>Euteleostomi</taxon>
        <taxon>Mammalia</taxon>
        <taxon>Eutheria</taxon>
        <taxon>Euarchontoglires</taxon>
        <taxon>Glires</taxon>
        <taxon>Rodentia</taxon>
        <taxon>Myomorpha</taxon>
        <taxon>Muroidea</taxon>
        <taxon>Muridae</taxon>
        <taxon>Murinae</taxon>
        <taxon>Mus</taxon>
        <taxon>Mus</taxon>
    </lineage>
</organism>
<sequence length="893" mass="99147">MAARVVLDEFTAPAEKAALLERSRGRIEALFGVGLAVLGALGAEEPLPARIWLQLRGAQEAVHSAKEYIKGICEPELEEKECYPKAMHCIFVGAQSLFLKSLIQDTCADLCVLDTGLLGIRGSAEAVVMARSHIQQFVKLFESNENLPSNQRESEIKREFRQFVEAHADSYTMDLLILPTSLKKELLSLTQGEESLFETDDDVITVGDVRPPEYTQSAATGPSSARDEVVVQEDSRNKARTPVSELTKHMDTVFSSSPDVLFVPVNGLSPDEDALSKDRVCHKRRSSDTEERHTKKQFSLENVPEGELLPDGKGSAGNEVIDLSDPASNSTNLSPDGKDTTEEMEYNILVNFFKTMGYSQEIVEKVIREYGPSTEPLLLLEEIEKENKRLQEDRDFPPCTVYPDASQSRNAGVGSTTNELTADSTPKKAQSHTEQSMVERFSQLPFKDSKHCTSNCKVNSFRTVPVGQKQEIWGSKQNSSCTVDLETDGHSASAASASPKDISFVSRGASGHQQRNPAFPENGFQQQTEPLLPNNTKPACEKRSGSCSSPQPKPNYPPLSPPLPLPQLLPSVTEARLGGSSDHIDSSVTGVQRFRDTLKIPYKLELKNEPGRADLKHIVIDGSNVAITHGLKKFFSCRGIAIAVEYFWKLGNRNITVFVPQWRTRRDPNITEQHFLTQLQELGILSLTPARMVFGERIASHDDRFLLHLADKTGGIIVTNDNFREFVTESVSWREIITKRLLQYTFVGDIFMVPDDPLGRNGPRLEEFLRKEAFLRHMQPLLNALPSVGTFDPGFRSPSTQVANNSHQPPPRIQTSSSPWLPQQSHFTALATLPSMQQNPPLPAQRSSAETSELREALLKIFPDSEQKLKIDQILAAHPYMKDLNALSALVLD</sequence>
<name>N4BP1_MOUSE</name>
<feature type="chain" id="PRO_0000301985" description="NEDD4-binding protein 1">
    <location>
        <begin position="1"/>
        <end position="893"/>
    </location>
</feature>
<feature type="domain" description="KH-like" evidence="2">
    <location>
        <begin position="59"/>
        <end position="143"/>
    </location>
</feature>
<feature type="domain" description="RNase NYN" evidence="2">
    <location>
        <begin position="615"/>
        <end position="767"/>
    </location>
</feature>
<feature type="region of interest" description="Disordered" evidence="3">
    <location>
        <begin position="213"/>
        <end position="243"/>
    </location>
</feature>
<feature type="region of interest" description="Disordered" evidence="3">
    <location>
        <begin position="273"/>
        <end position="339"/>
    </location>
</feature>
<feature type="region of interest" description="Disordered" evidence="3">
    <location>
        <begin position="394"/>
        <end position="433"/>
    </location>
</feature>
<feature type="region of interest" description="Disordered" evidence="3">
    <location>
        <begin position="472"/>
        <end position="564"/>
    </location>
</feature>
<feature type="region of interest" description="Disordered" evidence="3">
    <location>
        <begin position="793"/>
        <end position="820"/>
    </location>
</feature>
<feature type="region of interest" description="CoCUN" evidence="1">
    <location>
        <begin position="846"/>
        <end position="893"/>
    </location>
</feature>
<feature type="compositionally biased region" description="Polar residues" evidence="3">
    <location>
        <begin position="214"/>
        <end position="223"/>
    </location>
</feature>
<feature type="compositionally biased region" description="Basic and acidic residues" evidence="3">
    <location>
        <begin position="225"/>
        <end position="237"/>
    </location>
</feature>
<feature type="compositionally biased region" description="Polar residues" evidence="3">
    <location>
        <begin position="405"/>
        <end position="433"/>
    </location>
</feature>
<feature type="compositionally biased region" description="Polar residues" evidence="3">
    <location>
        <begin position="523"/>
        <end position="537"/>
    </location>
</feature>
<feature type="compositionally biased region" description="Pro residues" evidence="3">
    <location>
        <begin position="551"/>
        <end position="564"/>
    </location>
</feature>
<feature type="compositionally biased region" description="Polar residues" evidence="3">
    <location>
        <begin position="797"/>
        <end position="820"/>
    </location>
</feature>
<feature type="site" description="Cleavage; by CASP8" evidence="7">
    <location>
        <begin position="200"/>
        <end position="201"/>
    </location>
</feature>
<feature type="site" description="Cleavage" evidence="7">
    <location>
        <begin position="325"/>
        <end position="326"/>
    </location>
</feature>
<feature type="site" description="Cleavage; by CASP8" evidence="7">
    <location>
        <begin position="488"/>
        <end position="489"/>
    </location>
</feature>
<feature type="site" description="Cleavage; by MALT1" evidence="1">
    <location>
        <begin position="507"/>
        <end position="508"/>
    </location>
</feature>
<feature type="modified residue" description="Phosphothreonine" evidence="1">
    <location>
        <position position="241"/>
    </location>
</feature>
<feature type="modified residue" description="Phosphoserine" evidence="1">
    <location>
        <position position="257"/>
    </location>
</feature>
<feature type="modified residue" description="Phosphoserine" evidence="12">
    <location>
        <position position="269"/>
    </location>
</feature>
<feature type="modified residue" description="Phosphoserine" evidence="12">
    <location>
        <position position="299"/>
    </location>
</feature>
<feature type="modified residue" description="Phosphoserine" evidence="12">
    <location>
        <position position="560"/>
    </location>
</feature>
<feature type="mutagenesis site" description="Prevents cleavage by CASP8 and subsequent inactivation." evidence="7">
    <original>D</original>
    <variation>A</variation>
    <location>
        <position position="488"/>
    </location>
</feature>
<feature type="sequence conflict" description="In Ref. 2; BAE27970." evidence="10" ref="2">
    <original>G</original>
    <variation>E</variation>
    <location>
        <position position="93"/>
    </location>
</feature>
<feature type="sequence conflict" description="In Ref. 2; BAE27970." evidence="10" ref="2">
    <original>T</original>
    <variation>P</variation>
    <location>
        <position position="671"/>
    </location>
</feature>
<feature type="sequence conflict" description="In Ref. 2; BAE27970." evidence="10" ref="2">
    <original>R</original>
    <variation>T</variation>
    <location>
        <position position="724"/>
    </location>
</feature>
<feature type="sequence conflict" description="In Ref. 2; BAE27970." evidence="10" ref="2">
    <original>W</original>
    <variation>C</variation>
    <location>
        <position position="733"/>
    </location>
</feature>
<protein>
    <recommendedName>
        <fullName evidence="8">NEDD4-binding protein 1</fullName>
        <shortName evidence="8">N4BP1</shortName>
        <ecNumber evidence="1">3.1.-.-</ecNumber>
    </recommendedName>
</protein>
<reference key="1">
    <citation type="journal article" date="2004" name="DNA Res.">
        <title>Prediction of the coding sequences of mouse homologues of KIAA gene: IV. The complete nucleotide sequences of 500 mouse KIAA-homologous cDNAs identified by screening of terminal sequences of cDNA clones randomly sampled from size-fractionated libraries.</title>
        <authorList>
            <person name="Okazaki N."/>
            <person name="Kikuno R."/>
            <person name="Ohara R."/>
            <person name="Inamoto S."/>
            <person name="Koseki H."/>
            <person name="Hiraoka S."/>
            <person name="Saga Y."/>
            <person name="Seino S."/>
            <person name="Nishimura M."/>
            <person name="Kaisho T."/>
            <person name="Hoshino K."/>
            <person name="Kitamura H."/>
            <person name="Nagase T."/>
            <person name="Ohara O."/>
            <person name="Koga H."/>
        </authorList>
    </citation>
    <scope>NUCLEOTIDE SEQUENCE [LARGE SCALE MRNA]</scope>
    <source>
        <tissue>Pancreatic islet</tissue>
    </source>
</reference>
<reference key="2">
    <citation type="journal article" date="2005" name="Science">
        <title>The transcriptional landscape of the mammalian genome.</title>
        <authorList>
            <person name="Carninci P."/>
            <person name="Kasukawa T."/>
            <person name="Katayama S."/>
            <person name="Gough J."/>
            <person name="Frith M.C."/>
            <person name="Maeda N."/>
            <person name="Oyama R."/>
            <person name="Ravasi T."/>
            <person name="Lenhard B."/>
            <person name="Wells C."/>
            <person name="Kodzius R."/>
            <person name="Shimokawa K."/>
            <person name="Bajic V.B."/>
            <person name="Brenner S.E."/>
            <person name="Batalov S."/>
            <person name="Forrest A.R."/>
            <person name="Zavolan M."/>
            <person name="Davis M.J."/>
            <person name="Wilming L.G."/>
            <person name="Aidinis V."/>
            <person name="Allen J.E."/>
            <person name="Ambesi-Impiombato A."/>
            <person name="Apweiler R."/>
            <person name="Aturaliya R.N."/>
            <person name="Bailey T.L."/>
            <person name="Bansal M."/>
            <person name="Baxter L."/>
            <person name="Beisel K.W."/>
            <person name="Bersano T."/>
            <person name="Bono H."/>
            <person name="Chalk A.M."/>
            <person name="Chiu K.P."/>
            <person name="Choudhary V."/>
            <person name="Christoffels A."/>
            <person name="Clutterbuck D.R."/>
            <person name="Crowe M.L."/>
            <person name="Dalla E."/>
            <person name="Dalrymple B.P."/>
            <person name="de Bono B."/>
            <person name="Della Gatta G."/>
            <person name="di Bernardo D."/>
            <person name="Down T."/>
            <person name="Engstrom P."/>
            <person name="Fagiolini M."/>
            <person name="Faulkner G."/>
            <person name="Fletcher C.F."/>
            <person name="Fukushima T."/>
            <person name="Furuno M."/>
            <person name="Futaki S."/>
            <person name="Gariboldi M."/>
            <person name="Georgii-Hemming P."/>
            <person name="Gingeras T.R."/>
            <person name="Gojobori T."/>
            <person name="Green R.E."/>
            <person name="Gustincich S."/>
            <person name="Harbers M."/>
            <person name="Hayashi Y."/>
            <person name="Hensch T.K."/>
            <person name="Hirokawa N."/>
            <person name="Hill D."/>
            <person name="Huminiecki L."/>
            <person name="Iacono M."/>
            <person name="Ikeo K."/>
            <person name="Iwama A."/>
            <person name="Ishikawa T."/>
            <person name="Jakt M."/>
            <person name="Kanapin A."/>
            <person name="Katoh M."/>
            <person name="Kawasawa Y."/>
            <person name="Kelso J."/>
            <person name="Kitamura H."/>
            <person name="Kitano H."/>
            <person name="Kollias G."/>
            <person name="Krishnan S.P."/>
            <person name="Kruger A."/>
            <person name="Kummerfeld S.K."/>
            <person name="Kurochkin I.V."/>
            <person name="Lareau L.F."/>
            <person name="Lazarevic D."/>
            <person name="Lipovich L."/>
            <person name="Liu J."/>
            <person name="Liuni S."/>
            <person name="McWilliam S."/>
            <person name="Madan Babu M."/>
            <person name="Madera M."/>
            <person name="Marchionni L."/>
            <person name="Matsuda H."/>
            <person name="Matsuzawa S."/>
            <person name="Miki H."/>
            <person name="Mignone F."/>
            <person name="Miyake S."/>
            <person name="Morris K."/>
            <person name="Mottagui-Tabar S."/>
            <person name="Mulder N."/>
            <person name="Nakano N."/>
            <person name="Nakauchi H."/>
            <person name="Ng P."/>
            <person name="Nilsson R."/>
            <person name="Nishiguchi S."/>
            <person name="Nishikawa S."/>
            <person name="Nori F."/>
            <person name="Ohara O."/>
            <person name="Okazaki Y."/>
            <person name="Orlando V."/>
            <person name="Pang K.C."/>
            <person name="Pavan W.J."/>
            <person name="Pavesi G."/>
            <person name="Pesole G."/>
            <person name="Petrovsky N."/>
            <person name="Piazza S."/>
            <person name="Reed J."/>
            <person name="Reid J.F."/>
            <person name="Ring B.Z."/>
            <person name="Ringwald M."/>
            <person name="Rost B."/>
            <person name="Ruan Y."/>
            <person name="Salzberg S.L."/>
            <person name="Sandelin A."/>
            <person name="Schneider C."/>
            <person name="Schoenbach C."/>
            <person name="Sekiguchi K."/>
            <person name="Semple C.A."/>
            <person name="Seno S."/>
            <person name="Sessa L."/>
            <person name="Sheng Y."/>
            <person name="Shibata Y."/>
            <person name="Shimada H."/>
            <person name="Shimada K."/>
            <person name="Silva D."/>
            <person name="Sinclair B."/>
            <person name="Sperling S."/>
            <person name="Stupka E."/>
            <person name="Sugiura K."/>
            <person name="Sultana R."/>
            <person name="Takenaka Y."/>
            <person name="Taki K."/>
            <person name="Tammoja K."/>
            <person name="Tan S.L."/>
            <person name="Tang S."/>
            <person name="Taylor M.S."/>
            <person name="Tegner J."/>
            <person name="Teichmann S.A."/>
            <person name="Ueda H.R."/>
            <person name="van Nimwegen E."/>
            <person name="Verardo R."/>
            <person name="Wei C.L."/>
            <person name="Yagi K."/>
            <person name="Yamanishi H."/>
            <person name="Zabarovsky E."/>
            <person name="Zhu S."/>
            <person name="Zimmer A."/>
            <person name="Hide W."/>
            <person name="Bult C."/>
            <person name="Grimmond S.M."/>
            <person name="Teasdale R.D."/>
            <person name="Liu E.T."/>
            <person name="Brusic V."/>
            <person name="Quackenbush J."/>
            <person name="Wahlestedt C."/>
            <person name="Mattick J.S."/>
            <person name="Hume D.A."/>
            <person name="Kai C."/>
            <person name="Sasaki D."/>
            <person name="Tomaru Y."/>
            <person name="Fukuda S."/>
            <person name="Kanamori-Katayama M."/>
            <person name="Suzuki M."/>
            <person name="Aoki J."/>
            <person name="Arakawa T."/>
            <person name="Iida J."/>
            <person name="Imamura K."/>
            <person name="Itoh M."/>
            <person name="Kato T."/>
            <person name="Kawaji H."/>
            <person name="Kawagashira N."/>
            <person name="Kawashima T."/>
            <person name="Kojima M."/>
            <person name="Kondo S."/>
            <person name="Konno H."/>
            <person name="Nakano K."/>
            <person name="Ninomiya N."/>
            <person name="Nishio T."/>
            <person name="Okada M."/>
            <person name="Plessy C."/>
            <person name="Shibata K."/>
            <person name="Shiraki T."/>
            <person name="Suzuki S."/>
            <person name="Tagami M."/>
            <person name="Waki K."/>
            <person name="Watahiki A."/>
            <person name="Okamura-Oho Y."/>
            <person name="Suzuki H."/>
            <person name="Kawai J."/>
            <person name="Hayashizaki Y."/>
        </authorList>
    </citation>
    <scope>NUCLEOTIDE SEQUENCE [LARGE SCALE MRNA]</scope>
    <source>
        <strain>C57BL/6J</strain>
        <strain>NOD</strain>
        <tissue>Olfactory bulb</tissue>
    </source>
</reference>
<reference key="3">
    <citation type="journal article" date="2020" name="Nature">
        <title>Integration of innate immune signaling by caspase-8 cleavage of N4BP1.</title>
        <authorList>
            <person name="Gitlin A.D."/>
            <person name="Heger K."/>
            <person name="Schubert A.F."/>
            <person name="Reja R."/>
            <person name="Yan D."/>
            <person name="Pham V.C."/>
            <person name="Suto E."/>
            <person name="Zhang J."/>
            <person name="Kwon Y.C."/>
            <person name="Freund E.C."/>
            <person name="Kang J."/>
            <person name="Pham A."/>
            <person name="Caothien R."/>
            <person name="Bacarro N."/>
            <person name="Hinkle T."/>
            <person name="Xu M."/>
            <person name="McKenzie B.S."/>
            <person name="Haley B."/>
            <person name="Lee W.P."/>
            <person name="Lill J.R."/>
            <person name="Roose-Girma M."/>
            <person name="Dohse M."/>
            <person name="Webster J.D."/>
            <person name="Newton K."/>
            <person name="Dixit V.M."/>
        </authorList>
    </citation>
    <scope>PARTIAL PROTEIN SEQUENCE</scope>
    <scope>FUNCTION</scope>
    <scope>ACTIVITY REGULATION</scope>
    <scope>SUBCELLULAR LOCATION</scope>
    <scope>PROTEOLYTIC CLEAVAGE</scope>
    <scope>DISRUPTION PHENOTYPE</scope>
    <scope>MUTAGENESIS OF ASP-488</scope>
</reference>
<reference key="4">
    <citation type="journal article" date="2002" name="J. Biol. Chem.">
        <title>Identification of developmentally expressed proteins that functionally interact with Nedd4 ubiquitin ligase.</title>
        <authorList>
            <person name="Murillas R."/>
            <person name="Simms K.S."/>
            <person name="Hatakeyama S."/>
            <person name="Weissman A.M."/>
            <person name="Kuehn M.R."/>
        </authorList>
    </citation>
    <scope>SUBCELLULAR LOCATION</scope>
    <scope>UBIQUITINATION</scope>
    <scope>INTERACTION WITH NEDD4</scope>
</reference>
<reference key="5">
    <citation type="journal article" date="2007" name="Proc. Natl. Acad. Sci. U.S.A.">
        <title>The Nedd4-binding partner 1 (N4BP1) protein is an inhibitor of the E3 ligase Itch.</title>
        <authorList>
            <person name="Oberst A."/>
            <person name="Malatesta M."/>
            <person name="Aqeilan R.I."/>
            <person name="Rossi M."/>
            <person name="Salomoni P."/>
            <person name="Murillas R."/>
            <person name="Sharma P."/>
            <person name="Kuehn M.R."/>
            <person name="Oren M."/>
            <person name="Croce C.M."/>
            <person name="Bernassola F."/>
            <person name="Melino G."/>
        </authorList>
    </citation>
    <scope>FUNCTION</scope>
    <scope>INTERACTION WITH ITCH</scope>
</reference>
<reference key="6">
    <citation type="journal article" date="2010" name="Cell">
        <title>A tissue-specific atlas of mouse protein phosphorylation and expression.</title>
        <authorList>
            <person name="Huttlin E.L."/>
            <person name="Jedrychowski M.P."/>
            <person name="Elias J.E."/>
            <person name="Goswami T."/>
            <person name="Rad R."/>
            <person name="Beausoleil S.A."/>
            <person name="Villen J."/>
            <person name="Haas W."/>
            <person name="Sowa M.E."/>
            <person name="Gygi S.P."/>
        </authorList>
    </citation>
    <scope>PHOSPHORYLATION [LARGE SCALE ANALYSIS] AT SER-269; SER-299 AND SER-560</scope>
    <scope>IDENTIFICATION BY MASS SPECTROMETRY [LARGE SCALE ANALYSIS]</scope>
    <source>
        <tissue>Brain</tissue>
        <tissue>Heart</tissue>
        <tissue>Kidney</tissue>
        <tissue>Lung</tissue>
        <tissue>Spleen</tissue>
        <tissue>Testis</tissue>
    </source>
</reference>
<reference key="7">
    <citation type="journal article" date="2010" name="J. Cell Sci.">
        <title>N4BP1 is a newly identified nucleolar protein that undergoes SUMO-regulated polyubiquitylation and proteasomal turnover at promyelocytic leukemia nuclear bodies.</title>
        <authorList>
            <person name="Sharma P."/>
            <person name="Murillas R."/>
            <person name="Zhang H."/>
            <person name="Kuehn M.R."/>
        </authorList>
    </citation>
    <scope>SUBCELLULAR LOCATION</scope>
    <scope>UBIQUITINATION</scope>
    <scope>SUMOYLATION</scope>
    <scope>DESUMOYLATION BY SENP1</scope>
</reference>
<proteinExistence type="evidence at protein level"/>
<dbReference type="EC" id="3.1.-.-" evidence="1"/>
<dbReference type="EMBL" id="AK172981">
    <property type="protein sequence ID" value="BAD32259.1"/>
    <property type="status" value="ALT_INIT"/>
    <property type="molecule type" value="mRNA"/>
</dbReference>
<dbReference type="EMBL" id="AK134934">
    <property type="protein sequence ID" value="BAE22344.1"/>
    <property type="molecule type" value="mRNA"/>
</dbReference>
<dbReference type="EMBL" id="AK147522">
    <property type="protein sequence ID" value="BAE27970.1"/>
    <property type="molecule type" value="mRNA"/>
</dbReference>
<dbReference type="EMBL" id="AK170714">
    <property type="protein sequence ID" value="BAE41972.1"/>
    <property type="molecule type" value="mRNA"/>
</dbReference>
<dbReference type="CCDS" id="CCDS52625.1"/>
<dbReference type="RefSeq" id="NP_085040.2">
    <property type="nucleotide sequence ID" value="NM_030563.2"/>
</dbReference>
<dbReference type="SMR" id="Q6A037"/>
<dbReference type="BioGRID" id="219808">
    <property type="interactions" value="4"/>
</dbReference>
<dbReference type="FunCoup" id="Q6A037">
    <property type="interactions" value="3903"/>
</dbReference>
<dbReference type="STRING" id="10090.ENSMUSP00000034074"/>
<dbReference type="GlyGen" id="Q6A037">
    <property type="glycosylation" value="1 site, 1 N-linked glycan (1 site)"/>
</dbReference>
<dbReference type="iPTMnet" id="Q6A037"/>
<dbReference type="PhosphoSitePlus" id="Q6A037"/>
<dbReference type="jPOST" id="Q6A037"/>
<dbReference type="PaxDb" id="10090-ENSMUSP00000034074"/>
<dbReference type="PeptideAtlas" id="Q6A037"/>
<dbReference type="ProteomicsDB" id="252634"/>
<dbReference type="Pumba" id="Q6A037"/>
<dbReference type="Antibodypedia" id="49389">
    <property type="antibodies" value="135 antibodies from 30 providers"/>
</dbReference>
<dbReference type="Ensembl" id="ENSMUST00000034074.8">
    <property type="protein sequence ID" value="ENSMUSP00000034074.8"/>
    <property type="gene ID" value="ENSMUSG00000031652.12"/>
</dbReference>
<dbReference type="GeneID" id="80750"/>
<dbReference type="KEGG" id="mmu:80750"/>
<dbReference type="UCSC" id="uc009mqo.2">
    <property type="organism name" value="mouse"/>
</dbReference>
<dbReference type="AGR" id="MGI:2136825"/>
<dbReference type="CTD" id="9683"/>
<dbReference type="MGI" id="MGI:2136825">
    <property type="gene designation" value="N4bp1"/>
</dbReference>
<dbReference type="VEuPathDB" id="HostDB:ENSMUSG00000031652"/>
<dbReference type="eggNOG" id="KOG3777">
    <property type="taxonomic scope" value="Eukaryota"/>
</dbReference>
<dbReference type="GeneTree" id="ENSGT00940000158682"/>
<dbReference type="HOGENOM" id="CLU_014137_1_0_1"/>
<dbReference type="InParanoid" id="Q6A037"/>
<dbReference type="OMA" id="ICHKRRS"/>
<dbReference type="OrthoDB" id="392925at2759"/>
<dbReference type="PhylomeDB" id="Q6A037"/>
<dbReference type="TreeFam" id="TF315783"/>
<dbReference type="Reactome" id="R-MMU-9758274">
    <property type="pathway name" value="Regulation of NF-kappa B signaling"/>
</dbReference>
<dbReference type="BioGRID-ORCS" id="80750">
    <property type="hits" value="7 hits in 79 CRISPR screens"/>
</dbReference>
<dbReference type="ChiTaRS" id="N4bp1">
    <property type="organism name" value="mouse"/>
</dbReference>
<dbReference type="PRO" id="PR:Q6A037"/>
<dbReference type="Proteomes" id="UP000000589">
    <property type="component" value="Chromosome 8"/>
</dbReference>
<dbReference type="RNAct" id="Q6A037">
    <property type="molecule type" value="protein"/>
</dbReference>
<dbReference type="Bgee" id="ENSMUSG00000031652">
    <property type="expression patterns" value="Expressed in animal zygote and 248 other cell types or tissues"/>
</dbReference>
<dbReference type="GO" id="GO:0005829">
    <property type="term" value="C:cytosol"/>
    <property type="evidence" value="ECO:0000314"/>
    <property type="project" value="UniProtKB"/>
</dbReference>
<dbReference type="GO" id="GO:0005730">
    <property type="term" value="C:nucleolus"/>
    <property type="evidence" value="ECO:0000314"/>
    <property type="project" value="UniProtKB"/>
</dbReference>
<dbReference type="GO" id="GO:0005634">
    <property type="term" value="C:nucleus"/>
    <property type="evidence" value="ECO:0000314"/>
    <property type="project" value="MGI"/>
</dbReference>
<dbReference type="GO" id="GO:0016605">
    <property type="term" value="C:PML body"/>
    <property type="evidence" value="ECO:0000314"/>
    <property type="project" value="UniProtKB"/>
</dbReference>
<dbReference type="GO" id="GO:0003729">
    <property type="term" value="F:mRNA binding"/>
    <property type="evidence" value="ECO:0000250"/>
    <property type="project" value="UniProtKB"/>
</dbReference>
<dbReference type="GO" id="GO:0004540">
    <property type="term" value="F:RNA nuclease activity"/>
    <property type="evidence" value="ECO:0000250"/>
    <property type="project" value="UniProtKB"/>
</dbReference>
<dbReference type="GO" id="GO:0043130">
    <property type="term" value="F:ubiquitin binding"/>
    <property type="evidence" value="ECO:0000250"/>
    <property type="project" value="UniProtKB"/>
</dbReference>
<dbReference type="GO" id="GO:0034644">
    <property type="term" value="P:cellular response to UV"/>
    <property type="evidence" value="ECO:0000315"/>
    <property type="project" value="BHF-UCL"/>
</dbReference>
<dbReference type="GO" id="GO:0045087">
    <property type="term" value="P:innate immune response"/>
    <property type="evidence" value="ECO:0007669"/>
    <property type="project" value="UniProtKB-KW"/>
</dbReference>
<dbReference type="GO" id="GO:0001818">
    <property type="term" value="P:negative regulation of cytokine production"/>
    <property type="evidence" value="ECO:0000315"/>
    <property type="project" value="UniProtKB"/>
</dbReference>
<dbReference type="GO" id="GO:0032435">
    <property type="term" value="P:negative regulation of proteasomal ubiquitin-dependent protein catabolic process"/>
    <property type="evidence" value="ECO:0000314"/>
    <property type="project" value="UniProtKB"/>
</dbReference>
<dbReference type="GO" id="GO:0031397">
    <property type="term" value="P:negative regulation of protein ubiquitination"/>
    <property type="evidence" value="ECO:0000314"/>
    <property type="project" value="UniProtKB"/>
</dbReference>
<dbReference type="GO" id="GO:0045071">
    <property type="term" value="P:negative regulation of viral genome replication"/>
    <property type="evidence" value="ECO:0000250"/>
    <property type="project" value="UniProtKB"/>
</dbReference>
<dbReference type="GO" id="GO:0045088">
    <property type="term" value="P:regulation of innate immune response"/>
    <property type="evidence" value="ECO:0000314"/>
    <property type="project" value="UniProtKB"/>
</dbReference>
<dbReference type="CDD" id="cd22476">
    <property type="entry name" value="KH-I_N4BP1"/>
    <property type="match status" value="1"/>
</dbReference>
<dbReference type="CDD" id="cd09032">
    <property type="entry name" value="KH-I_N4BP1_like_rpt1"/>
    <property type="match status" value="1"/>
</dbReference>
<dbReference type="CDD" id="cd18728">
    <property type="entry name" value="PIN_N4BP1-like"/>
    <property type="match status" value="1"/>
</dbReference>
<dbReference type="FunFam" id="3.40.50.11980:FF:000001">
    <property type="entry name" value="ZC3H12A isoform 1"/>
    <property type="match status" value="1"/>
</dbReference>
<dbReference type="Gene3D" id="3.40.50.11980">
    <property type="match status" value="1"/>
</dbReference>
<dbReference type="InterPro" id="IPR036612">
    <property type="entry name" value="KH_dom_type_1_sf"/>
</dbReference>
<dbReference type="InterPro" id="IPR056629">
    <property type="entry name" value="KH_N4BP1_1st"/>
</dbReference>
<dbReference type="InterPro" id="IPR056630">
    <property type="entry name" value="KH_N4BP1_2nd"/>
</dbReference>
<dbReference type="InterPro" id="IPR021869">
    <property type="entry name" value="RNase_Zc3h12_NYN"/>
</dbReference>
<dbReference type="InterPro" id="IPR056631">
    <property type="entry name" value="UBA_N4BP1"/>
</dbReference>
<dbReference type="InterPro" id="IPR056578">
    <property type="entry name" value="UBA_N4BP1_C"/>
</dbReference>
<dbReference type="InterPro" id="IPR051101">
    <property type="entry name" value="ZC3H12/N4BP1_RNase_Reg"/>
</dbReference>
<dbReference type="PANTHER" id="PTHR12876">
    <property type="entry name" value="N4BP1-RELATED"/>
    <property type="match status" value="1"/>
</dbReference>
<dbReference type="PANTHER" id="PTHR12876:SF26">
    <property type="entry name" value="NEDD4-BINDING PROTEIN 1"/>
    <property type="match status" value="1"/>
</dbReference>
<dbReference type="Pfam" id="PF23050">
    <property type="entry name" value="KH_N4BP1_1st"/>
    <property type="match status" value="1"/>
</dbReference>
<dbReference type="Pfam" id="PF23052">
    <property type="entry name" value="KH_N4BP1_2nd"/>
    <property type="match status" value="1"/>
</dbReference>
<dbReference type="Pfam" id="PF11977">
    <property type="entry name" value="RNase_Zc3h12a"/>
    <property type="match status" value="1"/>
</dbReference>
<dbReference type="Pfam" id="PF23053">
    <property type="entry name" value="UBA_N4BP1"/>
    <property type="match status" value="1"/>
</dbReference>
<dbReference type="Pfam" id="PF23054">
    <property type="entry name" value="UBA_N4BP1_C"/>
    <property type="match status" value="1"/>
</dbReference>
<dbReference type="SUPFAM" id="SSF54791">
    <property type="entry name" value="Eukaryotic type KH-domain (KH-domain type I)"/>
    <property type="match status" value="1"/>
</dbReference>
<comment type="function">
    <text evidence="1 5 7">Potent suppressor of cytokine production that acts as a regulator of innate immune signaling and inflammation (PubMed:32971525). Acts as a key negative regulator of select cytokine and chemokine responses elicited by TRIF-independent Toll-like receptors (TLRs), thereby limiting inflammatory cytokine responses to minor insults (PubMed:32971525). In response to more threatening pathogens, cleaved by CASP8 downstream of TLR3 or TLR4, leading to its inactivation, thereby allowing production of inflammatory cytokines (PubMed:32971525). Acts as a restriction factor against some viruses: restricts viral replication by binding to mRNA viruses and mediating their degradation via its ribonuclease activity (By similarity). Also acts as an inhibitor of the E3 ubiquitin-protein ligase ITCH: acts by interacting with the second WW domain of ITCH, leading to compete with ITCH's substrates and impairing ubiquitination of substrates (PubMed:17592138).</text>
</comment>
<comment type="activity regulation">
    <text evidence="7">Proteolytic cleavage by CASP8 or MALT1 leads to its inactivation.</text>
</comment>
<comment type="subunit">
    <text evidence="4 5">Interacts with NEDD4 (PubMed:11717310). Interacts with ITCH (via WW domain 2) (PubMed:17592138).</text>
</comment>
<comment type="subcellular location">
    <subcellularLocation>
        <location evidence="7">Cytoplasm</location>
        <location evidence="7">Cytosol</location>
    </subcellularLocation>
    <subcellularLocation>
        <location evidence="4">Nucleus</location>
    </subcellularLocation>
    <subcellularLocation>
        <location evidence="6">Nucleus</location>
        <location evidence="6">Nucleolus</location>
    </subcellularLocation>
    <subcellularLocation>
        <location evidence="6">Nucleus</location>
        <location evidence="6">PML body</location>
    </subcellularLocation>
    <text evidence="6">Primarily localizes to the nucleolus (PubMed:20233849). Also localizes to the PML nuclear bodies, when desumoylated (PubMed:20233849).</text>
</comment>
<comment type="domain">
    <text evidence="1">The CoCUN region mediates binding to ubiquitin. Does not interact with NEDD8.</text>
</comment>
<comment type="PTM">
    <text evidence="1 7">Proteolytically cleaved by CASP8 downstream of TLR3 or TLR4, leading to its inactivation (PubMed:32971525). Mainly cleaved at Asp-488 by CASP8 (PubMed:32971525). Cleaved by caspase-like protein MALT1, leading to its inactivation (By similarity).</text>
</comment>
<comment type="PTM">
    <text evidence="1 4 6">Mono- and polyubiquitinated on the CoCUN region (By similarity). Monoubiquitinated by NEDD4 (PubMed:11717310). Polyubiquitinated, leading to its degradation by the proteasome (PubMed:20233849). Sumoylated with SUMO1, abrogating polyubiquitination and subsequent degradation (PubMed:20233849). Desumoylated by SENP1, leading to accumulation in PML nuclear bodies (PubMed:20233849).</text>
</comment>
<comment type="disruption phenotype">
    <text evidence="7">Mice are viable, fertile and grossly normal, but develop mild, age-dependent inflammation and immune dysregulation.</text>
</comment>
<comment type="similarity">
    <text evidence="10">Belongs to the N4BP1 family.</text>
</comment>
<comment type="sequence caution" evidence="10">
    <conflict type="erroneous initiation">
        <sequence resource="EMBL-CDS" id="BAD32259"/>
    </conflict>
    <text>Extended N-terminus.</text>
</comment>
<gene>
    <name evidence="8 11" type="primary">N4bp1</name>
    <name evidence="9" type="synonym">Kiaa0615</name>
</gene>
<keyword id="KW-0963">Cytoplasm</keyword>
<keyword id="KW-0903">Direct protein sequencing</keyword>
<keyword id="KW-0378">Hydrolase</keyword>
<keyword id="KW-0391">Immunity</keyword>
<keyword id="KW-0399">Innate immunity</keyword>
<keyword id="KW-0540">Nuclease</keyword>
<keyword id="KW-0539">Nucleus</keyword>
<keyword id="KW-0597">Phosphoprotein</keyword>
<keyword id="KW-1185">Reference proteome</keyword>
<keyword id="KW-0694">RNA-binding</keyword>
<keyword id="KW-0832">Ubl conjugation</keyword>
<evidence type="ECO:0000250" key="1">
    <source>
        <dbReference type="UniProtKB" id="O75113"/>
    </source>
</evidence>
<evidence type="ECO:0000255" key="2"/>
<evidence type="ECO:0000256" key="3">
    <source>
        <dbReference type="SAM" id="MobiDB-lite"/>
    </source>
</evidence>
<evidence type="ECO:0000269" key="4">
    <source>
    </source>
</evidence>
<evidence type="ECO:0000269" key="5">
    <source>
    </source>
</evidence>
<evidence type="ECO:0000269" key="6">
    <source>
    </source>
</evidence>
<evidence type="ECO:0000269" key="7">
    <source>
    </source>
</evidence>
<evidence type="ECO:0000303" key="8">
    <source>
    </source>
</evidence>
<evidence type="ECO:0000303" key="9">
    <source>
    </source>
</evidence>
<evidence type="ECO:0000305" key="10"/>
<evidence type="ECO:0000312" key="11">
    <source>
        <dbReference type="MGI" id="MGI:2136825"/>
    </source>
</evidence>
<evidence type="ECO:0007744" key="12">
    <source>
    </source>
</evidence>